<feature type="chain" id="PRO_0000461669" description="Methyltransferase GfsG">
    <location>
        <begin position="1"/>
        <end position="278"/>
    </location>
</feature>
<feature type="active site" description="Proton acceptor" evidence="9">
    <location>
        <position position="146"/>
    </location>
</feature>
<feature type="binding site" evidence="1">
    <location>
        <position position="105"/>
    </location>
    <ligand>
        <name>S-adenosyl-L-methionine</name>
        <dbReference type="ChEBI" id="CHEBI:59789"/>
    </ligand>
</feature>
<feature type="binding site" evidence="1">
    <location>
        <begin position="128"/>
        <end position="129"/>
    </location>
    <ligand>
        <name>S-adenosyl-L-methionine</name>
        <dbReference type="ChEBI" id="CHEBI:59789"/>
    </ligand>
</feature>
<feature type="binding site" evidence="9">
    <location>
        <position position="150"/>
    </location>
    <ligand>
        <name>S-adenosyl-L-methionine</name>
        <dbReference type="ChEBI" id="CHEBI:59789"/>
    </ligand>
</feature>
<feature type="mutagenesis site" description="40-fold increased KM for 25-O-demethyl-FD-891, 7-fold increased KM for SAM, almost no methylase activity." evidence="3">
    <original>E</original>
    <variation>A</variation>
    <location>
        <position position="146"/>
    </location>
</feature>
<feature type="mutagenesis site" description="2-fold increased KM for SAM, slightly decreased kcat with 25-O-demethyl-FD-891." evidence="3">
    <original>H</original>
    <variation>A</variation>
    <location>
        <position position="150"/>
    </location>
</feature>
<feature type="mutagenesis site" description="3-fold increased KM for SAM, slightly decreased kcat with 25-O-demethyl-FD-891." evidence="3">
    <original>D</original>
    <variation>A</variation>
    <location>
        <position position="175"/>
    </location>
</feature>
<dbReference type="EC" id="2.1.1.-" evidence="3"/>
<dbReference type="EMBL" id="AB469193">
    <property type="protein sequence ID" value="BAJ16473.1"/>
    <property type="molecule type" value="Genomic_DNA"/>
</dbReference>
<dbReference type="GO" id="GO:0008757">
    <property type="term" value="F:S-adenosylmethionine-dependent methyltransferase activity"/>
    <property type="evidence" value="ECO:0007669"/>
    <property type="project" value="InterPro"/>
</dbReference>
<dbReference type="GO" id="GO:0017000">
    <property type="term" value="P:antibiotic biosynthetic process"/>
    <property type="evidence" value="ECO:0007669"/>
    <property type="project" value="UniProtKB-KW"/>
</dbReference>
<dbReference type="GO" id="GO:0032259">
    <property type="term" value="P:methylation"/>
    <property type="evidence" value="ECO:0007669"/>
    <property type="project" value="UniProtKB-KW"/>
</dbReference>
<dbReference type="CDD" id="cd02440">
    <property type="entry name" value="AdoMet_MTases"/>
    <property type="match status" value="1"/>
</dbReference>
<dbReference type="Gene3D" id="3.40.50.150">
    <property type="entry name" value="Vaccinia Virus protein VP39"/>
    <property type="match status" value="1"/>
</dbReference>
<dbReference type="InterPro" id="IPR050447">
    <property type="entry name" value="Erg6_SMT_methyltransf"/>
</dbReference>
<dbReference type="InterPro" id="IPR020803">
    <property type="entry name" value="MeTfrase_dom"/>
</dbReference>
<dbReference type="InterPro" id="IPR013216">
    <property type="entry name" value="Methyltransf_11"/>
</dbReference>
<dbReference type="InterPro" id="IPR029063">
    <property type="entry name" value="SAM-dependent_MTases_sf"/>
</dbReference>
<dbReference type="PANTHER" id="PTHR44068:SF11">
    <property type="entry name" value="GERANYL DIPHOSPHATE 2-C-METHYLTRANSFERASE"/>
    <property type="match status" value="1"/>
</dbReference>
<dbReference type="PANTHER" id="PTHR44068">
    <property type="entry name" value="ZGC:194242"/>
    <property type="match status" value="1"/>
</dbReference>
<dbReference type="Pfam" id="PF08241">
    <property type="entry name" value="Methyltransf_11"/>
    <property type="match status" value="1"/>
</dbReference>
<dbReference type="SMART" id="SM00828">
    <property type="entry name" value="PKS_MT"/>
    <property type="match status" value="1"/>
</dbReference>
<dbReference type="SUPFAM" id="SSF53335">
    <property type="entry name" value="S-adenosyl-L-methionine-dependent methyltransferases"/>
    <property type="match status" value="1"/>
</dbReference>
<gene>
    <name evidence="6" type="primary">gfsG</name>
</gene>
<evidence type="ECO:0000250" key="1">
    <source>
        <dbReference type="UniProtKB" id="Q8KZ94"/>
    </source>
</evidence>
<evidence type="ECO:0000269" key="2">
    <source>
    </source>
</evidence>
<evidence type="ECO:0000269" key="3">
    <source>
    </source>
</evidence>
<evidence type="ECO:0000269" key="4">
    <source>
    </source>
</evidence>
<evidence type="ECO:0000269" key="5">
    <source ref="4"/>
</evidence>
<evidence type="ECO:0000303" key="6">
    <source>
    </source>
</evidence>
<evidence type="ECO:0000305" key="7"/>
<evidence type="ECO:0000305" key="8">
    <source>
    </source>
</evidence>
<evidence type="ECO:0000305" key="9">
    <source>
    </source>
</evidence>
<evidence type="ECO:0000312" key="10">
    <source>
        <dbReference type="EMBL" id="BAJ16473.1"/>
    </source>
</evidence>
<sequence>MGPANSEGTMFDAFSREVGDYYDQANELLRAMFTDNVHYGYWPDPSSIDPLAEAGERMTEQLYERLDVSAGHKVLDVGCGVGKPAAWLARKTGATVKGANVSRNQLEVARDRVRSEGLEDRVSFDLADAMHLPYADDSFDRIWAIESMIHMPDRDQVMREMARVLRPGGRLAIADIVVRGTLDDVATAVVEGFCTLSTARSLEHIDNYPALVEKAGLDLLELTDVSEQTRPTGPAVLPAFDVLLPTLGEEGVAQSKKAWGDMFDLPQYGYVLLTAGKP</sequence>
<reference evidence="10" key="1">
    <citation type="journal article" date="2010" name="ChemBioChem">
        <title>Cloning and characterization of the biosynthetic gene cluster of 16-membered macrolide antibiotic FD-891: involvement of a dual functional cytochrome P450 monooxygenase catalyzing epoxidation and hydroxylation.</title>
        <authorList>
            <person name="Kudo F."/>
            <person name="Motegi A."/>
            <person name="Mizoue K."/>
            <person name="Eguchi T."/>
        </authorList>
    </citation>
    <scope>NUCLEOTIDE SEQUENCE [GENOMIC DNA]</scope>
    <source>
        <strain>A-8890</strain>
    </source>
</reference>
<reference key="2">
    <citation type="journal article" date="2010" name="ChemBioChem">
        <authorList>
            <person name="Kudo F."/>
            <person name="Motegi A."/>
            <person name="Mizoue K."/>
            <person name="Eguchi T."/>
        </authorList>
    </citation>
    <scope>ERRATUM OF PUBMED:20589823</scope>
</reference>
<reference key="3">
    <citation type="journal article" date="1994" name="J. Antibiot.">
        <title>Isolation and characterization of new 18-membered macrolides FD-891 and FD-892.</title>
        <authorList>
            <person name="Seki-Asano M."/>
            <person name="Okazaki T."/>
            <person name="Yamagishi M."/>
            <person name="Sakai N."/>
            <person name="Hanada K."/>
            <person name="Mizoue K."/>
        </authorList>
    </citation>
    <scope>ANTIBIOTIC ISOLATION AND ACTIVITY CHARACTERIZATION AGAINST HUMAN CELL LINES</scope>
    <source>
        <strain>A-8890</strain>
    </source>
</reference>
<reference key="4">
    <citation type="journal article" date="2005" name="J. Gen. Plant Pathol.">
        <title>Phytotoxin produced by Streptomyces sp. causing potato russet scab in Japan.</title>
        <authorList>
            <person name="Natsume M."/>
            <person name="Komiya M."/>
            <person name="Koyanagi F."/>
            <person name="Tashiro N."/>
            <person name="Kawaide H."/>
            <person name="Abe H."/>
        </authorList>
    </citation>
    <scope>ANTIBIOTIC ISOLATION AND ACTIVITY CHARACTERIZATION AGAINST PLANTS</scope>
</reference>
<reference key="5">
    <citation type="journal article" date="2016" name="ChemBioChem">
        <title>Parallel Post-Polyketide Synthase Modification Mechanism Involved in FD-891 Biosynthesis in Streptomyces graminofaciens A-8890.</title>
        <authorList>
            <person name="Kudo F."/>
            <person name="Kawamura K."/>
            <person name="Furuya T."/>
            <person name="Yamanishi H."/>
            <person name="Motegi A."/>
            <person name="Komatsubara A."/>
            <person name="Numakura M."/>
            <person name="Miyanaga A."/>
            <person name="Eguchi T."/>
        </authorList>
    </citation>
    <scope>FUNCTION</scope>
    <scope>CATALYTIC ACTIVITY</scope>
    <scope>POSSIBLE ACTIVE SITE</scope>
    <scope>BIOPHYSICOCHEMICAL PROPERTIES</scope>
    <scope>PATHWAY</scope>
    <scope>DISRUPTION PHENOTYPE</scope>
    <scope>MUTAGENESIS OF GLU-146; HIS-150 AND ASP-175</scope>
    <source>
        <strain>A-8890</strain>
    </source>
</reference>
<accession>E0D208</accession>
<name>GFSG_STRHA</name>
<proteinExistence type="evidence at protein level"/>
<organism>
    <name type="scientific">Streptomyces halstedii</name>
    <dbReference type="NCBI Taxonomy" id="1944"/>
    <lineage>
        <taxon>Bacteria</taxon>
        <taxon>Bacillati</taxon>
        <taxon>Actinomycetota</taxon>
        <taxon>Actinomycetes</taxon>
        <taxon>Kitasatosporales</taxon>
        <taxon>Streptomycetaceae</taxon>
        <taxon>Streptomyces</taxon>
    </lineage>
</organism>
<protein>
    <recommendedName>
        <fullName evidence="7">Methyltransferase GfsG</fullName>
        <ecNumber evidence="3">2.1.1.-</ecNumber>
    </recommendedName>
</protein>
<comment type="function">
    <text evidence="2 3">Methylase required for synthesis of the 16-membered macrolide antibiotics FD-891 and FD-892 (PubMed:20589823, PubMed:26630077). In vitro uses S-adenosyl-L-methionine to methylate a number of biosynthetic intermediates in the synthesis of FD-891 (PubMed:26630077).</text>
</comment>
<comment type="biophysicochemical properties">
    <kinetics>
        <KM evidence="3">1.5 uM for 25-O-demethyl-FD-891</KM>
        <KM evidence="3">19 uM for S-adenosyl-L-methionine</KM>
        <text evidence="3">kcat is 1.3 min(-1) for 25-O-demethyl-FD-891.</text>
    </kinetics>
</comment>
<comment type="pathway">
    <text evidence="3 8">Antibiotic biosynthesis.</text>
</comment>
<comment type="disruption phenotype">
    <text evidence="3">Bacteria make 25-O-demethyl-FD-891. Double gfsF-gfsG deletions make a diastereomeric mxiture of 25-oxo-FD-892.</text>
</comment>
<comment type="miscellaneous">
    <text evidence="4 5">The macrolide antibiotics FD-891 and FD-892 induce morphological changes of human promyelocytic leukemia (HL-60) cells and have cytocidal activity against tumor cell lines in vitro (PubMed:8002384). FD-891 produced by Streptomyces sp. MAFF 225003 and MAFF 225006 inhibits growth of rice and alfalfa seedlings and may cause russet scab in potatoes (Ref.4).</text>
</comment>
<comment type="similarity">
    <text evidence="7">Belongs to the methyltransferase superfamily.</text>
</comment>
<keyword id="KW-0045">Antibiotic biosynthesis</keyword>
<keyword id="KW-0489">Methyltransferase</keyword>
<keyword id="KW-0949">S-adenosyl-L-methionine</keyword>
<keyword id="KW-0808">Transferase</keyword>